<name>RS14Z_STRCO</name>
<protein>
    <recommendedName>
        <fullName evidence="1">Small ribosomal subunit protein uS14B</fullName>
    </recommendedName>
    <alternativeName>
        <fullName evidence="2">30S ribosomal protein S14 type Z</fullName>
    </alternativeName>
</protein>
<dbReference type="EMBL" id="AL939121">
    <property type="protein sequence ID" value="CAB82083.1"/>
    <property type="molecule type" value="Genomic_DNA"/>
</dbReference>
<dbReference type="RefSeq" id="NP_628874.1">
    <property type="nucleotide sequence ID" value="NC_003888.3"/>
</dbReference>
<dbReference type="RefSeq" id="WP_003948630.1">
    <property type="nucleotide sequence ID" value="NZ_VNID01000016.1"/>
</dbReference>
<dbReference type="SMR" id="P66417"/>
<dbReference type="FunCoup" id="P66417">
    <property type="interactions" value="79"/>
</dbReference>
<dbReference type="STRING" id="100226.gene:17762364"/>
<dbReference type="PaxDb" id="100226-SCO4715"/>
<dbReference type="KEGG" id="sco:SCO4715"/>
<dbReference type="PATRIC" id="fig|100226.15.peg.4786"/>
<dbReference type="eggNOG" id="COG0199">
    <property type="taxonomic scope" value="Bacteria"/>
</dbReference>
<dbReference type="HOGENOM" id="CLU_139869_3_0_11"/>
<dbReference type="InParanoid" id="P66417"/>
<dbReference type="OrthoDB" id="9810484at2"/>
<dbReference type="PhylomeDB" id="P66417"/>
<dbReference type="PRO" id="PR:P66417"/>
<dbReference type="Proteomes" id="UP000001973">
    <property type="component" value="Chromosome"/>
</dbReference>
<dbReference type="GO" id="GO:0005737">
    <property type="term" value="C:cytoplasm"/>
    <property type="evidence" value="ECO:0007669"/>
    <property type="project" value="UniProtKB-ARBA"/>
</dbReference>
<dbReference type="GO" id="GO:0015935">
    <property type="term" value="C:small ribosomal subunit"/>
    <property type="evidence" value="ECO:0000318"/>
    <property type="project" value="GO_Central"/>
</dbReference>
<dbReference type="GO" id="GO:0019843">
    <property type="term" value="F:rRNA binding"/>
    <property type="evidence" value="ECO:0007669"/>
    <property type="project" value="UniProtKB-UniRule"/>
</dbReference>
<dbReference type="GO" id="GO:0003735">
    <property type="term" value="F:structural constituent of ribosome"/>
    <property type="evidence" value="ECO:0000318"/>
    <property type="project" value="GO_Central"/>
</dbReference>
<dbReference type="GO" id="GO:0008270">
    <property type="term" value="F:zinc ion binding"/>
    <property type="evidence" value="ECO:0007669"/>
    <property type="project" value="UniProtKB-UniRule"/>
</dbReference>
<dbReference type="GO" id="GO:0006412">
    <property type="term" value="P:translation"/>
    <property type="evidence" value="ECO:0000318"/>
    <property type="project" value="GO_Central"/>
</dbReference>
<dbReference type="FunFam" id="4.10.830.10:FF:000001">
    <property type="entry name" value="30S ribosomal protein S14 type Z"/>
    <property type="match status" value="1"/>
</dbReference>
<dbReference type="Gene3D" id="4.10.830.10">
    <property type="entry name" value="30s Ribosomal Protein S14, Chain N"/>
    <property type="match status" value="1"/>
</dbReference>
<dbReference type="HAMAP" id="MF_01364_B">
    <property type="entry name" value="Ribosomal_uS14_2_B"/>
    <property type="match status" value="1"/>
</dbReference>
<dbReference type="InterPro" id="IPR001209">
    <property type="entry name" value="Ribosomal_uS14"/>
</dbReference>
<dbReference type="InterPro" id="IPR023053">
    <property type="entry name" value="Ribosomal_uS14_bact"/>
</dbReference>
<dbReference type="InterPro" id="IPR018271">
    <property type="entry name" value="Ribosomal_uS14_CS"/>
</dbReference>
<dbReference type="InterPro" id="IPR043140">
    <property type="entry name" value="Ribosomal_uS14_sf"/>
</dbReference>
<dbReference type="NCBIfam" id="NF005974">
    <property type="entry name" value="PRK08061.1"/>
    <property type="match status" value="1"/>
</dbReference>
<dbReference type="PANTHER" id="PTHR19836">
    <property type="entry name" value="30S RIBOSOMAL PROTEIN S14"/>
    <property type="match status" value="1"/>
</dbReference>
<dbReference type="PANTHER" id="PTHR19836:SF19">
    <property type="entry name" value="SMALL RIBOSOMAL SUBUNIT PROTEIN US14M"/>
    <property type="match status" value="1"/>
</dbReference>
<dbReference type="Pfam" id="PF00253">
    <property type="entry name" value="Ribosomal_S14"/>
    <property type="match status" value="1"/>
</dbReference>
<dbReference type="SUPFAM" id="SSF57716">
    <property type="entry name" value="Glucocorticoid receptor-like (DNA-binding domain)"/>
    <property type="match status" value="1"/>
</dbReference>
<dbReference type="PROSITE" id="PS00527">
    <property type="entry name" value="RIBOSOMAL_S14"/>
    <property type="match status" value="1"/>
</dbReference>
<reference key="1">
    <citation type="journal article" date="2002" name="Nature">
        <title>Complete genome sequence of the model actinomycete Streptomyces coelicolor A3(2).</title>
        <authorList>
            <person name="Bentley S.D."/>
            <person name="Chater K.F."/>
            <person name="Cerdeno-Tarraga A.-M."/>
            <person name="Challis G.L."/>
            <person name="Thomson N.R."/>
            <person name="James K.D."/>
            <person name="Harris D.E."/>
            <person name="Quail M.A."/>
            <person name="Kieser H."/>
            <person name="Harper D."/>
            <person name="Bateman A."/>
            <person name="Brown S."/>
            <person name="Chandra G."/>
            <person name="Chen C.W."/>
            <person name="Collins M."/>
            <person name="Cronin A."/>
            <person name="Fraser A."/>
            <person name="Goble A."/>
            <person name="Hidalgo J."/>
            <person name="Hornsby T."/>
            <person name="Howarth S."/>
            <person name="Huang C.-H."/>
            <person name="Kieser T."/>
            <person name="Larke L."/>
            <person name="Murphy L.D."/>
            <person name="Oliver K."/>
            <person name="O'Neil S."/>
            <person name="Rabbinowitsch E."/>
            <person name="Rajandream M.A."/>
            <person name="Rutherford K.M."/>
            <person name="Rutter S."/>
            <person name="Seeger K."/>
            <person name="Saunders D."/>
            <person name="Sharp S."/>
            <person name="Squares R."/>
            <person name="Squares S."/>
            <person name="Taylor K."/>
            <person name="Warren T."/>
            <person name="Wietzorrek A."/>
            <person name="Woodward J.R."/>
            <person name="Barrell B.G."/>
            <person name="Parkhill J."/>
            <person name="Hopwood D.A."/>
        </authorList>
    </citation>
    <scope>NUCLEOTIDE SEQUENCE [LARGE SCALE GENOMIC DNA]</scope>
    <source>
        <strain>ATCC BAA-471 / A3(2) / M145</strain>
    </source>
</reference>
<gene>
    <name evidence="1" type="primary">rpsZ</name>
    <name evidence="1" type="synonym">rpsN1</name>
    <name type="ordered locus">SCO4715</name>
    <name type="ORF">SCD31.40</name>
</gene>
<comment type="function">
    <text evidence="1">Binds 16S rRNA, required for the assembly of 30S particles and may also be responsible for determining the conformation of the 16S rRNA at the A site.</text>
</comment>
<comment type="cofactor">
    <cofactor evidence="1">
        <name>Zn(2+)</name>
        <dbReference type="ChEBI" id="CHEBI:29105"/>
    </cofactor>
    <text evidence="1">Binds 1 zinc ion per subunit.</text>
</comment>
<comment type="subunit">
    <text evidence="1">Part of the 30S ribosomal subunit. Contacts proteins S3 and S10.</text>
</comment>
<comment type="similarity">
    <text evidence="1">Belongs to the universal ribosomal protein uS14 family. Zinc-binding uS14 subfamily.</text>
</comment>
<keyword id="KW-0479">Metal-binding</keyword>
<keyword id="KW-1185">Reference proteome</keyword>
<keyword id="KW-0687">Ribonucleoprotein</keyword>
<keyword id="KW-0689">Ribosomal protein</keyword>
<keyword id="KW-0694">RNA-binding</keyword>
<keyword id="KW-0699">rRNA-binding</keyword>
<keyword id="KW-0862">Zinc</keyword>
<organism>
    <name type="scientific">Streptomyces coelicolor (strain ATCC BAA-471 / A3(2) / M145)</name>
    <dbReference type="NCBI Taxonomy" id="100226"/>
    <lineage>
        <taxon>Bacteria</taxon>
        <taxon>Bacillati</taxon>
        <taxon>Actinomycetota</taxon>
        <taxon>Actinomycetes</taxon>
        <taxon>Kitasatosporales</taxon>
        <taxon>Streptomycetaceae</taxon>
        <taxon>Streptomyces</taxon>
        <taxon>Streptomyces albidoflavus group</taxon>
    </lineage>
</organism>
<sequence length="61" mass="6949">MAKKALIAKAARKPKFGVRGYTRCQRCGRPHSVYRKFGLCRVCLREMAHRGELPGVTKSSW</sequence>
<evidence type="ECO:0000255" key="1">
    <source>
        <dbReference type="HAMAP-Rule" id="MF_01364"/>
    </source>
</evidence>
<evidence type="ECO:0000305" key="2"/>
<proteinExistence type="inferred from homology"/>
<feature type="chain" id="PRO_0000130938" description="Small ribosomal subunit protein uS14B">
    <location>
        <begin position="1"/>
        <end position="61"/>
    </location>
</feature>
<feature type="binding site" evidence="1">
    <location>
        <position position="24"/>
    </location>
    <ligand>
        <name>Zn(2+)</name>
        <dbReference type="ChEBI" id="CHEBI:29105"/>
    </ligand>
</feature>
<feature type="binding site" evidence="1">
    <location>
        <position position="27"/>
    </location>
    <ligand>
        <name>Zn(2+)</name>
        <dbReference type="ChEBI" id="CHEBI:29105"/>
    </ligand>
</feature>
<feature type="binding site" evidence="1">
    <location>
        <position position="40"/>
    </location>
    <ligand>
        <name>Zn(2+)</name>
        <dbReference type="ChEBI" id="CHEBI:29105"/>
    </ligand>
</feature>
<feature type="binding site" evidence="1">
    <location>
        <position position="43"/>
    </location>
    <ligand>
        <name>Zn(2+)</name>
        <dbReference type="ChEBI" id="CHEBI:29105"/>
    </ligand>
</feature>
<accession>P66417</accession>
<accession>Q9L0C7</accession>